<evidence type="ECO:0000255" key="1">
    <source>
        <dbReference type="HAMAP-Rule" id="MF_00178"/>
    </source>
</evidence>
<dbReference type="EC" id="2.5.1.78" evidence="1"/>
<dbReference type="EMBL" id="AP009384">
    <property type="protein sequence ID" value="BAF87263.1"/>
    <property type="molecule type" value="Genomic_DNA"/>
</dbReference>
<dbReference type="RefSeq" id="WP_012169796.1">
    <property type="nucleotide sequence ID" value="NC_009937.1"/>
</dbReference>
<dbReference type="SMR" id="A8I0J5"/>
<dbReference type="STRING" id="438753.AZC_1265"/>
<dbReference type="KEGG" id="azc:AZC_1265"/>
<dbReference type="eggNOG" id="COG0054">
    <property type="taxonomic scope" value="Bacteria"/>
</dbReference>
<dbReference type="HOGENOM" id="CLU_089358_1_2_5"/>
<dbReference type="UniPathway" id="UPA00275">
    <property type="reaction ID" value="UER00404"/>
</dbReference>
<dbReference type="Proteomes" id="UP000000270">
    <property type="component" value="Chromosome"/>
</dbReference>
<dbReference type="GO" id="GO:0005829">
    <property type="term" value="C:cytosol"/>
    <property type="evidence" value="ECO:0007669"/>
    <property type="project" value="TreeGrafter"/>
</dbReference>
<dbReference type="GO" id="GO:0009349">
    <property type="term" value="C:riboflavin synthase complex"/>
    <property type="evidence" value="ECO:0007669"/>
    <property type="project" value="InterPro"/>
</dbReference>
<dbReference type="GO" id="GO:0000906">
    <property type="term" value="F:6,7-dimethyl-8-ribityllumazine synthase activity"/>
    <property type="evidence" value="ECO:0007669"/>
    <property type="project" value="UniProtKB-UniRule"/>
</dbReference>
<dbReference type="GO" id="GO:0009231">
    <property type="term" value="P:riboflavin biosynthetic process"/>
    <property type="evidence" value="ECO:0007669"/>
    <property type="project" value="UniProtKB-UniRule"/>
</dbReference>
<dbReference type="CDD" id="cd09209">
    <property type="entry name" value="Lumazine_synthase-I"/>
    <property type="match status" value="1"/>
</dbReference>
<dbReference type="Gene3D" id="3.40.50.960">
    <property type="entry name" value="Lumazine/riboflavin synthase"/>
    <property type="match status" value="1"/>
</dbReference>
<dbReference type="HAMAP" id="MF_00178">
    <property type="entry name" value="Lumazine_synth"/>
    <property type="match status" value="1"/>
</dbReference>
<dbReference type="InterPro" id="IPR034964">
    <property type="entry name" value="LS"/>
</dbReference>
<dbReference type="InterPro" id="IPR002180">
    <property type="entry name" value="LS/RS"/>
</dbReference>
<dbReference type="InterPro" id="IPR036467">
    <property type="entry name" value="LS/RS_sf"/>
</dbReference>
<dbReference type="NCBIfam" id="TIGR00114">
    <property type="entry name" value="lumazine-synth"/>
    <property type="match status" value="1"/>
</dbReference>
<dbReference type="PANTHER" id="PTHR21058:SF0">
    <property type="entry name" value="6,7-DIMETHYL-8-RIBITYLLUMAZINE SYNTHASE"/>
    <property type="match status" value="1"/>
</dbReference>
<dbReference type="PANTHER" id="PTHR21058">
    <property type="entry name" value="6,7-DIMETHYL-8-RIBITYLLUMAZINE SYNTHASE DMRL SYNTHASE LUMAZINE SYNTHASE"/>
    <property type="match status" value="1"/>
</dbReference>
<dbReference type="Pfam" id="PF00885">
    <property type="entry name" value="DMRL_synthase"/>
    <property type="match status" value="1"/>
</dbReference>
<dbReference type="SUPFAM" id="SSF52121">
    <property type="entry name" value="Lumazine synthase"/>
    <property type="match status" value="1"/>
</dbReference>
<accession>A8I0J5</accession>
<name>RISB_AZOC5</name>
<reference key="1">
    <citation type="submission" date="2007-04" db="EMBL/GenBank/DDBJ databases">
        <title>Complete genome sequence of the nitrogen-fixing bacterium Azorhizobium caulinodans ORS571.</title>
        <authorList>
            <person name="Lee K.B."/>
            <person name="Backer P.D."/>
            <person name="Aono T."/>
            <person name="Liu C.T."/>
            <person name="Suzuki S."/>
            <person name="Suzuki T."/>
            <person name="Kaneko T."/>
            <person name="Yamada M."/>
            <person name="Tabata S."/>
            <person name="Kupfer D.M."/>
            <person name="Najar F.Z."/>
            <person name="Wiley G.B."/>
            <person name="Roe B."/>
            <person name="Binnewies T."/>
            <person name="Ussery D."/>
            <person name="Vereecke D."/>
            <person name="Gevers D."/>
            <person name="Holsters M."/>
            <person name="Oyaizu H."/>
        </authorList>
    </citation>
    <scope>NUCLEOTIDE SEQUENCE [LARGE SCALE GENOMIC DNA]</scope>
    <source>
        <strain>ATCC 43989 / DSM 5975 / JCM 20966 / LMG 6465 / NBRC 14845 / NCIMB 13405 / ORS 571</strain>
    </source>
</reference>
<sequence length="162" mass="16778">MVSTRKEGASAGEPVTGARVLIVEGRYYEALADELLAGARAALEAAGATVDVITVPGALEIPIAAEIALEAAEEEDEPYEAVVALGCVIRGETYHFEIVAGESSRGLMDLALAHALPLGNGILTVETEAQAWERARVGEGNKGGGAAEAALSLVRLKRRGLK</sequence>
<keyword id="KW-1185">Reference proteome</keyword>
<keyword id="KW-0686">Riboflavin biosynthesis</keyword>
<keyword id="KW-0808">Transferase</keyword>
<comment type="function">
    <text evidence="1">Catalyzes the formation of 6,7-dimethyl-8-ribityllumazine by condensation of 5-amino-6-(D-ribitylamino)uracil with 3,4-dihydroxy-2-butanone 4-phosphate. This is the penultimate step in the biosynthesis of riboflavin.</text>
</comment>
<comment type="catalytic activity">
    <reaction evidence="1">
        <text>(2S)-2-hydroxy-3-oxobutyl phosphate + 5-amino-6-(D-ribitylamino)uracil = 6,7-dimethyl-8-(1-D-ribityl)lumazine + phosphate + 2 H2O + H(+)</text>
        <dbReference type="Rhea" id="RHEA:26152"/>
        <dbReference type="ChEBI" id="CHEBI:15377"/>
        <dbReference type="ChEBI" id="CHEBI:15378"/>
        <dbReference type="ChEBI" id="CHEBI:15934"/>
        <dbReference type="ChEBI" id="CHEBI:43474"/>
        <dbReference type="ChEBI" id="CHEBI:58201"/>
        <dbReference type="ChEBI" id="CHEBI:58830"/>
        <dbReference type="EC" id="2.5.1.78"/>
    </reaction>
</comment>
<comment type="pathway">
    <text evidence="1">Cofactor biosynthesis; riboflavin biosynthesis; riboflavin from 2-hydroxy-3-oxobutyl phosphate and 5-amino-6-(D-ribitylamino)uracil: step 1/2.</text>
</comment>
<comment type="similarity">
    <text evidence="1">Belongs to the DMRL synthase family.</text>
</comment>
<feature type="chain" id="PRO_1000071642" description="6,7-dimethyl-8-ribityllumazine synthase">
    <location>
        <begin position="1"/>
        <end position="162"/>
    </location>
</feature>
<feature type="active site" description="Proton donor" evidence="1">
    <location>
        <position position="95"/>
    </location>
</feature>
<feature type="binding site" evidence="1">
    <location>
        <position position="27"/>
    </location>
    <ligand>
        <name>5-amino-6-(D-ribitylamino)uracil</name>
        <dbReference type="ChEBI" id="CHEBI:15934"/>
    </ligand>
</feature>
<feature type="binding site" evidence="1">
    <location>
        <begin position="58"/>
        <end position="60"/>
    </location>
    <ligand>
        <name>5-amino-6-(D-ribitylamino)uracil</name>
        <dbReference type="ChEBI" id="CHEBI:15934"/>
    </ligand>
</feature>
<feature type="binding site" evidence="1">
    <location>
        <begin position="87"/>
        <end position="89"/>
    </location>
    <ligand>
        <name>5-amino-6-(D-ribitylamino)uracil</name>
        <dbReference type="ChEBI" id="CHEBI:15934"/>
    </ligand>
</feature>
<feature type="binding site" evidence="1">
    <location>
        <begin position="92"/>
        <end position="93"/>
    </location>
    <ligand>
        <name>(2S)-2-hydroxy-3-oxobutyl phosphate</name>
        <dbReference type="ChEBI" id="CHEBI:58830"/>
    </ligand>
</feature>
<feature type="binding site" evidence="1">
    <location>
        <position position="120"/>
    </location>
    <ligand>
        <name>5-amino-6-(D-ribitylamino)uracil</name>
        <dbReference type="ChEBI" id="CHEBI:15934"/>
    </ligand>
</feature>
<feature type="binding site" evidence="1">
    <location>
        <position position="134"/>
    </location>
    <ligand>
        <name>(2S)-2-hydroxy-3-oxobutyl phosphate</name>
        <dbReference type="ChEBI" id="CHEBI:58830"/>
    </ligand>
</feature>
<organism>
    <name type="scientific">Azorhizobium caulinodans (strain ATCC 43989 / DSM 5975 / JCM 20966 / LMG 6465 / NBRC 14845 / NCIMB 13405 / ORS 571)</name>
    <dbReference type="NCBI Taxonomy" id="438753"/>
    <lineage>
        <taxon>Bacteria</taxon>
        <taxon>Pseudomonadati</taxon>
        <taxon>Pseudomonadota</taxon>
        <taxon>Alphaproteobacteria</taxon>
        <taxon>Hyphomicrobiales</taxon>
        <taxon>Xanthobacteraceae</taxon>
        <taxon>Azorhizobium</taxon>
    </lineage>
</organism>
<protein>
    <recommendedName>
        <fullName evidence="1">6,7-dimethyl-8-ribityllumazine synthase</fullName>
        <shortName evidence="1">DMRL synthase</shortName>
        <shortName evidence="1">LS</shortName>
        <shortName evidence="1">Lumazine synthase</shortName>
        <ecNumber evidence="1">2.5.1.78</ecNumber>
    </recommendedName>
</protein>
<gene>
    <name evidence="1" type="primary">ribH</name>
    <name type="ordered locus">AZC_1265</name>
</gene>
<proteinExistence type="inferred from homology"/>